<dbReference type="EC" id="7.1.1.2"/>
<dbReference type="EMBL" id="X55026">
    <property type="protein sequence ID" value="CAA38795.1"/>
    <property type="molecule type" value="Genomic_DNA"/>
</dbReference>
<dbReference type="EMBL" id="X55026">
    <property type="protein sequence ID" value="CAA38794.1"/>
    <property type="molecule type" value="Genomic_DNA"/>
</dbReference>
<dbReference type="PIR" id="S09132">
    <property type="entry name" value="S09132"/>
</dbReference>
<dbReference type="SMR" id="P20680"/>
<dbReference type="STRING" id="515849.P20680"/>
<dbReference type="KEGG" id="pan:PoanfMp34"/>
<dbReference type="InParanoid" id="P20680"/>
<dbReference type="Proteomes" id="UP000001197">
    <property type="component" value="Mitochondrion"/>
</dbReference>
<dbReference type="GO" id="GO:0031966">
    <property type="term" value="C:mitochondrial membrane"/>
    <property type="evidence" value="ECO:0007669"/>
    <property type="project" value="UniProtKB-SubCell"/>
</dbReference>
<dbReference type="GO" id="GO:0030964">
    <property type="term" value="C:NADH dehydrogenase complex"/>
    <property type="evidence" value="ECO:0007669"/>
    <property type="project" value="TreeGrafter"/>
</dbReference>
<dbReference type="GO" id="GO:0008137">
    <property type="term" value="F:NADH dehydrogenase (ubiquinone) activity"/>
    <property type="evidence" value="ECO:0007669"/>
    <property type="project" value="UniProtKB-EC"/>
</dbReference>
<dbReference type="GO" id="GO:0042773">
    <property type="term" value="P:ATP synthesis coupled electron transport"/>
    <property type="evidence" value="ECO:0007669"/>
    <property type="project" value="InterPro"/>
</dbReference>
<dbReference type="FunFam" id="1.10.287.3510:FF:000004">
    <property type="entry name" value="NADH-ubiquinone oxidoreductase chain 4L"/>
    <property type="match status" value="1"/>
</dbReference>
<dbReference type="Gene3D" id="1.10.287.3510">
    <property type="match status" value="1"/>
</dbReference>
<dbReference type="InterPro" id="IPR001133">
    <property type="entry name" value="NADH_UbQ_OxRdtase_chain4L/K"/>
</dbReference>
<dbReference type="InterPro" id="IPR039428">
    <property type="entry name" value="NUOK/Mnh_C1-like"/>
</dbReference>
<dbReference type="NCBIfam" id="NF004320">
    <property type="entry name" value="PRK05715.1-2"/>
    <property type="match status" value="1"/>
</dbReference>
<dbReference type="PANTHER" id="PTHR11434:SF16">
    <property type="entry name" value="NADH-UBIQUINONE OXIDOREDUCTASE CHAIN 4L"/>
    <property type="match status" value="1"/>
</dbReference>
<dbReference type="PANTHER" id="PTHR11434">
    <property type="entry name" value="NADH-UBIQUINONE OXIDOREDUCTASE SUBUNIT ND4L"/>
    <property type="match status" value="1"/>
</dbReference>
<dbReference type="Pfam" id="PF00420">
    <property type="entry name" value="Oxidored_q2"/>
    <property type="match status" value="1"/>
</dbReference>
<geneLocation type="mitochondrion"/>
<organism>
    <name type="scientific">Podospora anserina (strain S / ATCC MYA-4624 / DSM 980 / FGSC 10383)</name>
    <name type="common">Pleurage anserina</name>
    <dbReference type="NCBI Taxonomy" id="515849"/>
    <lineage>
        <taxon>Eukaryota</taxon>
        <taxon>Fungi</taxon>
        <taxon>Dikarya</taxon>
        <taxon>Ascomycota</taxon>
        <taxon>Pezizomycotina</taxon>
        <taxon>Sordariomycetes</taxon>
        <taxon>Sordariomycetidae</taxon>
        <taxon>Sordariales</taxon>
        <taxon>Podosporaceae</taxon>
        <taxon>Podospora</taxon>
        <taxon>Podospora anserina</taxon>
    </lineage>
</organism>
<reference key="1">
    <citation type="journal article" date="1990" name="J. Mol. Biol.">
        <title>DNA sequence analysis of the mitochondrial ND4L-ND5 gene complex from Podospora anserina. Duplication of the ND4L gene within its intron.</title>
        <authorList>
            <person name="Cummings D.J."/>
            <person name="Michel F."/>
            <person name="Domenico J.M."/>
            <person name="McNally K.L."/>
        </authorList>
    </citation>
    <scope>NUCLEOTIDE SEQUENCE [GENOMIC DNA]</scope>
    <source>
        <strain>A</strain>
        <strain>s</strain>
    </source>
</reference>
<reference key="2">
    <citation type="journal article" date="1990" name="Curr. Genet.">
        <title>The complete DNA sequence of the mitochondrial genome of Podospora anserina.</title>
        <authorList>
            <person name="Cummings D.J."/>
            <person name="McNally K.L."/>
            <person name="Domenico J.M."/>
            <person name="Matsuura E.T."/>
        </authorList>
    </citation>
    <scope>NUCLEOTIDE SEQUENCE [LARGE SCALE GENOMIC DNA]</scope>
    <source>
        <strain>s</strain>
    </source>
</reference>
<gene>
    <name type="primary">ND4L</name>
</gene>
<keyword id="KW-0249">Electron transport</keyword>
<keyword id="KW-0472">Membrane</keyword>
<keyword id="KW-0496">Mitochondrion</keyword>
<keyword id="KW-0520">NAD</keyword>
<keyword id="KW-1185">Reference proteome</keyword>
<keyword id="KW-0679">Respiratory chain</keyword>
<keyword id="KW-1278">Translocase</keyword>
<keyword id="KW-0812">Transmembrane</keyword>
<keyword id="KW-1133">Transmembrane helix</keyword>
<keyword id="KW-0813">Transport</keyword>
<keyword id="KW-0830">Ubiquinone</keyword>
<comment type="function">
    <text evidence="1">Core subunit of the mitochondrial membrane respiratory chain NADH dehydrogenase (Complex I) that is believed to belong to the minimal assembly required for catalysis. Complex I functions in the transfer of electrons from NADH to the respiratory chain. The immediate electron acceptor for the enzyme is believed to be ubiquinone (By similarity).</text>
</comment>
<comment type="catalytic activity">
    <reaction>
        <text>a ubiquinone + NADH + 5 H(+)(in) = a ubiquinol + NAD(+) + 4 H(+)(out)</text>
        <dbReference type="Rhea" id="RHEA:29091"/>
        <dbReference type="Rhea" id="RHEA-COMP:9565"/>
        <dbReference type="Rhea" id="RHEA-COMP:9566"/>
        <dbReference type="ChEBI" id="CHEBI:15378"/>
        <dbReference type="ChEBI" id="CHEBI:16389"/>
        <dbReference type="ChEBI" id="CHEBI:17976"/>
        <dbReference type="ChEBI" id="CHEBI:57540"/>
        <dbReference type="ChEBI" id="CHEBI:57945"/>
        <dbReference type="EC" id="7.1.1.2"/>
    </reaction>
</comment>
<comment type="subcellular location">
    <subcellularLocation>
        <location evidence="1">Mitochondrion membrane</location>
        <topology evidence="1">Multi-pass membrane protein</topology>
    </subcellularLocation>
</comment>
<comment type="similarity">
    <text evidence="3">Belongs to the complex I subunit 4L family.</text>
</comment>
<proteinExistence type="inferred from homology"/>
<sequence length="89" mass="9803">MNITLILFLIGILGFVLNRKNIILMLISIEIMLLAITFLILVSSLNMDDIIGQTYAIYIIVVAGAESAIGLGILVAFYRLRGSIAIEYK</sequence>
<protein>
    <recommendedName>
        <fullName>NADH-ubiquinone oxidoreductase chain 4L</fullName>
        <ecNumber>7.1.1.2</ecNumber>
    </recommendedName>
    <alternativeName>
        <fullName>NADH dehydrogenase subunit 4L</fullName>
    </alternativeName>
</protein>
<name>NU4LM_PODAN</name>
<accession>P20680</accession>
<feature type="chain" id="PRO_0000118475" description="NADH-ubiquinone oxidoreductase chain 4L">
    <location>
        <begin position="1"/>
        <end position="89"/>
    </location>
</feature>
<feature type="transmembrane region" description="Helical" evidence="2">
    <location>
        <begin position="1"/>
        <end position="21"/>
    </location>
</feature>
<feature type="transmembrane region" description="Helical" evidence="2">
    <location>
        <begin position="22"/>
        <end position="42"/>
    </location>
</feature>
<feature type="transmembrane region" description="Helical" evidence="2">
    <location>
        <begin position="57"/>
        <end position="77"/>
    </location>
</feature>
<feature type="sequence variant" description="In strain: A+.">
    <original>A</original>
    <variation>S</variation>
    <location>
        <position position="85"/>
    </location>
</feature>
<evidence type="ECO:0000250" key="1"/>
<evidence type="ECO:0000255" key="2"/>
<evidence type="ECO:0000305" key="3"/>